<feature type="chain" id="PRO_0000107237" description="Uncharacterized protein in radB 5'region">
    <location>
        <begin position="1"/>
        <end position="109"/>
    </location>
</feature>
<evidence type="ECO:0000305" key="1"/>
<accession>P0CW48</accession>
<accession>O50249</accession>
<sequence>MRILLKLFVESQNLGKAINALSEGGISGFYLKEYQGMSPDDWKGFLLAEEPEMAIKIVNELSQDTVVINSIVNIECLGKIKELVRKKLENDRYTLVELPVLGMEVNSPE</sequence>
<reference key="1">
    <citation type="submission" date="1997-11" db="EMBL/GenBank/DDBJ databases">
        <authorList>
            <person name="Yu J.-P."/>
            <person name="Whitman W.B."/>
        </authorList>
    </citation>
    <scope>NUCLEOTIDE SEQUENCE [GENOMIC DNA]</scope>
    <source>
        <strain>ATCC 43000 / DSM 2067 / JCM 10722 / JJ</strain>
    </source>
</reference>
<name>Y618_METMI</name>
<organism>
    <name type="scientific">Methanococcus maripaludis</name>
    <name type="common">Methanococcus deltae</name>
    <dbReference type="NCBI Taxonomy" id="39152"/>
    <lineage>
        <taxon>Archaea</taxon>
        <taxon>Methanobacteriati</taxon>
        <taxon>Methanobacteriota</taxon>
        <taxon>Methanomada group</taxon>
        <taxon>Methanococci</taxon>
        <taxon>Methanococcales</taxon>
        <taxon>Methanococcaceae</taxon>
        <taxon>Methanococcus</taxon>
    </lineage>
</organism>
<comment type="similarity">
    <text evidence="1">To M.jannaschii MJ1244 and MJ1245 and M.thermoautotrophicum MTH1110.</text>
</comment>
<dbReference type="EMBL" id="AF034787">
    <property type="protein sequence ID" value="AAB88383.1"/>
    <property type="molecule type" value="Genomic_DNA"/>
</dbReference>
<dbReference type="RefSeq" id="WP_011170562.1">
    <property type="nucleotide sequence ID" value="NZ_JAGINF010000004.1"/>
</dbReference>
<dbReference type="SMR" id="P0CW48"/>
<dbReference type="GeneID" id="36101459"/>
<dbReference type="InterPro" id="IPR011322">
    <property type="entry name" value="N-reg_PII-like_a/b"/>
</dbReference>
<dbReference type="InterPro" id="IPR019296">
    <property type="entry name" value="Unchr_N-regulatory-PII-rel"/>
</dbReference>
<dbReference type="Pfam" id="PF10126">
    <property type="entry name" value="Nit_Regul_Hom"/>
    <property type="match status" value="1"/>
</dbReference>
<dbReference type="SUPFAM" id="SSF54913">
    <property type="entry name" value="GlnB-like"/>
    <property type="match status" value="1"/>
</dbReference>
<proteinExistence type="predicted"/>
<protein>
    <recommendedName>
        <fullName>Uncharacterized protein in radB 5'region</fullName>
    </recommendedName>
</protein>